<evidence type="ECO:0000255" key="1">
    <source>
        <dbReference type="HAMAP-Rule" id="MF_00095"/>
    </source>
</evidence>
<dbReference type="EMBL" id="CP000230">
    <property type="protein sequence ID" value="ABC21539.1"/>
    <property type="molecule type" value="Genomic_DNA"/>
</dbReference>
<dbReference type="RefSeq" id="WP_011388493.1">
    <property type="nucleotide sequence ID" value="NC_007643.1"/>
</dbReference>
<dbReference type="RefSeq" id="YP_425826.1">
    <property type="nucleotide sequence ID" value="NC_007643.1"/>
</dbReference>
<dbReference type="SMR" id="Q2RWF6"/>
<dbReference type="STRING" id="269796.Rru_A0735"/>
<dbReference type="EnsemblBacteria" id="ABC21539">
    <property type="protein sequence ID" value="ABC21539"/>
    <property type="gene ID" value="Rru_A0735"/>
</dbReference>
<dbReference type="KEGG" id="rru:Rru_A0735"/>
<dbReference type="PATRIC" id="fig|269796.9.peg.787"/>
<dbReference type="eggNOG" id="COG1489">
    <property type="taxonomic scope" value="Bacteria"/>
</dbReference>
<dbReference type="HOGENOM" id="CLU_052299_2_0_5"/>
<dbReference type="PhylomeDB" id="Q2RWF6"/>
<dbReference type="Proteomes" id="UP000001929">
    <property type="component" value="Chromosome"/>
</dbReference>
<dbReference type="GO" id="GO:0003677">
    <property type="term" value="F:DNA binding"/>
    <property type="evidence" value="ECO:0007669"/>
    <property type="project" value="InterPro"/>
</dbReference>
<dbReference type="CDD" id="cd22359">
    <property type="entry name" value="SfsA-like_bacterial"/>
    <property type="match status" value="1"/>
</dbReference>
<dbReference type="Gene3D" id="2.40.50.580">
    <property type="match status" value="1"/>
</dbReference>
<dbReference type="Gene3D" id="3.40.1350.60">
    <property type="match status" value="1"/>
</dbReference>
<dbReference type="HAMAP" id="MF_00095">
    <property type="entry name" value="SfsA"/>
    <property type="match status" value="1"/>
</dbReference>
<dbReference type="InterPro" id="IPR005224">
    <property type="entry name" value="SfsA"/>
</dbReference>
<dbReference type="InterPro" id="IPR040452">
    <property type="entry name" value="SfsA_C"/>
</dbReference>
<dbReference type="InterPro" id="IPR041465">
    <property type="entry name" value="SfsA_N"/>
</dbReference>
<dbReference type="NCBIfam" id="TIGR00230">
    <property type="entry name" value="sfsA"/>
    <property type="match status" value="1"/>
</dbReference>
<dbReference type="PANTHER" id="PTHR30545">
    <property type="entry name" value="SUGAR FERMENTATION STIMULATION PROTEIN A"/>
    <property type="match status" value="1"/>
</dbReference>
<dbReference type="PANTHER" id="PTHR30545:SF2">
    <property type="entry name" value="SUGAR FERMENTATION STIMULATION PROTEIN A"/>
    <property type="match status" value="1"/>
</dbReference>
<dbReference type="Pfam" id="PF03749">
    <property type="entry name" value="SfsA"/>
    <property type="match status" value="1"/>
</dbReference>
<dbReference type="Pfam" id="PF17746">
    <property type="entry name" value="SfsA_N"/>
    <property type="match status" value="1"/>
</dbReference>
<gene>
    <name evidence="1" type="primary">sfsA</name>
    <name type="ordered locus">Rru_A0735</name>
</gene>
<sequence>MLFPTPLVEGRLVKRYMRFLADVILDDGTAVTAHCANSGSMASVKEPGSPVWLSESPNPDRKLKYTWEIIRVGDAYSGVNTGTPNAVVAEAIAEGKIPPLAGYARLRREVKYGKTSRIDILLEDDAAADDAPARPRCYVEVKNVTLKRDPAWDGPIDFPDAVTTRGAKHLLELADMVDQGHRAAMVYLVQRTDGGAVAMAADIDPAYAAGLKTAIAKGVEVYCLGCEVDPLRGIWVNRALPLIAP</sequence>
<accession>Q2RWF6</accession>
<feature type="chain" id="PRO_1000008017" description="Sugar fermentation stimulation protein homolog">
    <location>
        <begin position="1"/>
        <end position="245"/>
    </location>
</feature>
<name>SFSA_RHORT</name>
<proteinExistence type="inferred from homology"/>
<protein>
    <recommendedName>
        <fullName evidence="1">Sugar fermentation stimulation protein homolog</fullName>
    </recommendedName>
</protein>
<reference key="1">
    <citation type="journal article" date="2011" name="Stand. Genomic Sci.">
        <title>Complete genome sequence of Rhodospirillum rubrum type strain (S1).</title>
        <authorList>
            <person name="Munk A.C."/>
            <person name="Copeland A."/>
            <person name="Lucas S."/>
            <person name="Lapidus A."/>
            <person name="Del Rio T.G."/>
            <person name="Barry K."/>
            <person name="Detter J.C."/>
            <person name="Hammon N."/>
            <person name="Israni S."/>
            <person name="Pitluck S."/>
            <person name="Brettin T."/>
            <person name="Bruce D."/>
            <person name="Han C."/>
            <person name="Tapia R."/>
            <person name="Gilna P."/>
            <person name="Schmutz J."/>
            <person name="Larimer F."/>
            <person name="Land M."/>
            <person name="Kyrpides N.C."/>
            <person name="Mavromatis K."/>
            <person name="Richardson P."/>
            <person name="Rohde M."/>
            <person name="Goeker M."/>
            <person name="Klenk H.P."/>
            <person name="Zhang Y."/>
            <person name="Roberts G.P."/>
            <person name="Reslewic S."/>
            <person name="Schwartz D.C."/>
        </authorList>
    </citation>
    <scope>NUCLEOTIDE SEQUENCE [LARGE SCALE GENOMIC DNA]</scope>
    <source>
        <strain>ATCC 11170 / ATH 1.1.1 / DSM 467 / LMG 4362 / NCIMB 8255 / S1</strain>
    </source>
</reference>
<comment type="similarity">
    <text evidence="1">Belongs to the SfsA family.</text>
</comment>
<organism>
    <name type="scientific">Rhodospirillum rubrum (strain ATCC 11170 / ATH 1.1.1 / DSM 467 / LMG 4362 / NCIMB 8255 / S1)</name>
    <dbReference type="NCBI Taxonomy" id="269796"/>
    <lineage>
        <taxon>Bacteria</taxon>
        <taxon>Pseudomonadati</taxon>
        <taxon>Pseudomonadota</taxon>
        <taxon>Alphaproteobacteria</taxon>
        <taxon>Rhodospirillales</taxon>
        <taxon>Rhodospirillaceae</taxon>
        <taxon>Rhodospirillum</taxon>
    </lineage>
</organism>
<keyword id="KW-1185">Reference proteome</keyword>